<gene>
    <name type="ordered locus">Saro_1818</name>
</gene>
<proteinExistence type="inferred from homology"/>
<accession>Q2G7B5</accession>
<name>Y1818_NOVAD</name>
<organism>
    <name type="scientific">Novosphingobium aromaticivorans (strain ATCC 700278 / DSM 12444 / CCUG 56034 / CIP 105152 / NBRC 16084 / F199)</name>
    <dbReference type="NCBI Taxonomy" id="279238"/>
    <lineage>
        <taxon>Bacteria</taxon>
        <taxon>Pseudomonadati</taxon>
        <taxon>Pseudomonadota</taxon>
        <taxon>Alphaproteobacteria</taxon>
        <taxon>Sphingomonadales</taxon>
        <taxon>Sphingomonadaceae</taxon>
        <taxon>Novosphingobium</taxon>
    </lineage>
</organism>
<evidence type="ECO:0000255" key="1">
    <source>
        <dbReference type="HAMAP-Rule" id="MF_01514"/>
    </source>
</evidence>
<sequence>MNRQGVRLLPDRGGSLAAFGVGLAVVIILLGMGRPPICPCGVVRLWHGVVESAENSQQVSDWYSFSHLIHGFLFYGAAHIVWRRFGFAELSPRWALALAVLIEGSWEILENSPIIIDRYRSVTISWGYSGDSVLNSAADIGFMAAGFLFAARAPVLVTVVLGIGFELFTLWAIRDNLALNILMLVWPVEAVRVWQGGG</sequence>
<dbReference type="EMBL" id="CP000248">
    <property type="protein sequence ID" value="ABD26258.1"/>
    <property type="molecule type" value="Genomic_DNA"/>
</dbReference>
<dbReference type="RefSeq" id="WP_011445468.1">
    <property type="nucleotide sequence ID" value="NC_007794.1"/>
</dbReference>
<dbReference type="STRING" id="279238.Saro_1818"/>
<dbReference type="KEGG" id="nar:Saro_1818"/>
<dbReference type="eggNOG" id="ENOG502ZZUX">
    <property type="taxonomic scope" value="Bacteria"/>
</dbReference>
<dbReference type="HOGENOM" id="CLU_1395337_0_0_5"/>
<dbReference type="Proteomes" id="UP000009134">
    <property type="component" value="Chromosome"/>
</dbReference>
<dbReference type="GO" id="GO:0005886">
    <property type="term" value="C:plasma membrane"/>
    <property type="evidence" value="ECO:0007669"/>
    <property type="project" value="UniProtKB-SubCell"/>
</dbReference>
<dbReference type="HAMAP" id="MF_01514">
    <property type="entry name" value="UPF0314"/>
    <property type="match status" value="1"/>
</dbReference>
<dbReference type="InterPro" id="IPR019691">
    <property type="entry name" value="DUF2585"/>
</dbReference>
<dbReference type="NCBIfam" id="NF002099">
    <property type="entry name" value="PRK00944.1"/>
    <property type="match status" value="1"/>
</dbReference>
<dbReference type="Pfam" id="PF10755">
    <property type="entry name" value="DUF2585"/>
    <property type="match status" value="1"/>
</dbReference>
<comment type="subcellular location">
    <subcellularLocation>
        <location evidence="1">Cell membrane</location>
        <topology evidence="1">Multi-pass membrane protein</topology>
    </subcellularLocation>
</comment>
<comment type="similarity">
    <text evidence="1">Belongs to the UPF0314 family.</text>
</comment>
<keyword id="KW-1003">Cell membrane</keyword>
<keyword id="KW-0472">Membrane</keyword>
<keyword id="KW-1185">Reference proteome</keyword>
<keyword id="KW-0812">Transmembrane</keyword>
<keyword id="KW-1133">Transmembrane helix</keyword>
<reference key="1">
    <citation type="submission" date="2006-01" db="EMBL/GenBank/DDBJ databases">
        <title>Complete sequence of Novosphingobium aromaticivorans DSM 12444.</title>
        <authorList>
            <consortium name="US DOE Joint Genome Institute"/>
            <person name="Copeland A."/>
            <person name="Lucas S."/>
            <person name="Lapidus A."/>
            <person name="Barry K."/>
            <person name="Detter J.C."/>
            <person name="Glavina T."/>
            <person name="Hammon N."/>
            <person name="Israni S."/>
            <person name="Pitluck S."/>
            <person name="Chain P."/>
            <person name="Malfatti S."/>
            <person name="Shin M."/>
            <person name="Vergez L."/>
            <person name="Schmutz J."/>
            <person name="Larimer F."/>
            <person name="Land M."/>
            <person name="Kyrpides N."/>
            <person name="Ivanova N."/>
            <person name="Fredrickson J."/>
            <person name="Balkwill D."/>
            <person name="Romine M.F."/>
            <person name="Richardson P."/>
        </authorList>
    </citation>
    <scope>NUCLEOTIDE SEQUENCE [LARGE SCALE GENOMIC DNA]</scope>
    <source>
        <strain>ATCC 700278 / DSM 12444 / CCUG 56034 / CIP 105152 / NBRC 16084 / F199</strain>
    </source>
</reference>
<protein>
    <recommendedName>
        <fullName evidence="1">UPF0314 protein Saro_1818</fullName>
    </recommendedName>
</protein>
<feature type="chain" id="PRO_0000248039" description="UPF0314 protein Saro_1818">
    <location>
        <begin position="1"/>
        <end position="198"/>
    </location>
</feature>
<feature type="transmembrane region" description="Helical" evidence="1">
    <location>
        <begin position="13"/>
        <end position="33"/>
    </location>
</feature>
<feature type="transmembrane region" description="Helical" evidence="1">
    <location>
        <begin position="62"/>
        <end position="82"/>
    </location>
</feature>
<feature type="transmembrane region" description="Helical" evidence="1">
    <location>
        <begin position="96"/>
        <end position="116"/>
    </location>
</feature>
<feature type="transmembrane region" description="Helical" evidence="1">
    <location>
        <begin position="153"/>
        <end position="173"/>
    </location>
</feature>
<feature type="transmembrane region" description="Helical" evidence="1">
    <location>
        <begin position="177"/>
        <end position="197"/>
    </location>
</feature>